<dbReference type="EC" id="5.3.1.1" evidence="1"/>
<dbReference type="EMBL" id="AM494475">
    <property type="protein sequence ID" value="CAM79206.1"/>
    <property type="molecule type" value="Genomic_DNA"/>
</dbReference>
<dbReference type="RefSeq" id="WP_011944287.1">
    <property type="nucleotide sequence ID" value="NC_009488.1"/>
</dbReference>
<dbReference type="SMR" id="A5CC41"/>
<dbReference type="KEGG" id="ots:OTBS_0140"/>
<dbReference type="eggNOG" id="COG0149">
    <property type="taxonomic scope" value="Bacteria"/>
</dbReference>
<dbReference type="HOGENOM" id="CLU_024251_2_3_5"/>
<dbReference type="UniPathway" id="UPA00109">
    <property type="reaction ID" value="UER00189"/>
</dbReference>
<dbReference type="UniPathway" id="UPA00138"/>
<dbReference type="Proteomes" id="UP000001565">
    <property type="component" value="Chromosome"/>
</dbReference>
<dbReference type="GO" id="GO:0005829">
    <property type="term" value="C:cytosol"/>
    <property type="evidence" value="ECO:0007669"/>
    <property type="project" value="TreeGrafter"/>
</dbReference>
<dbReference type="GO" id="GO:0004807">
    <property type="term" value="F:triose-phosphate isomerase activity"/>
    <property type="evidence" value="ECO:0007669"/>
    <property type="project" value="UniProtKB-UniRule"/>
</dbReference>
<dbReference type="GO" id="GO:0006094">
    <property type="term" value="P:gluconeogenesis"/>
    <property type="evidence" value="ECO:0007669"/>
    <property type="project" value="UniProtKB-UniRule"/>
</dbReference>
<dbReference type="GO" id="GO:0046166">
    <property type="term" value="P:glyceraldehyde-3-phosphate biosynthetic process"/>
    <property type="evidence" value="ECO:0007669"/>
    <property type="project" value="TreeGrafter"/>
</dbReference>
<dbReference type="GO" id="GO:0019563">
    <property type="term" value="P:glycerol catabolic process"/>
    <property type="evidence" value="ECO:0007669"/>
    <property type="project" value="TreeGrafter"/>
</dbReference>
<dbReference type="GO" id="GO:0006096">
    <property type="term" value="P:glycolytic process"/>
    <property type="evidence" value="ECO:0007669"/>
    <property type="project" value="UniProtKB-UniRule"/>
</dbReference>
<dbReference type="CDD" id="cd00311">
    <property type="entry name" value="TIM"/>
    <property type="match status" value="1"/>
</dbReference>
<dbReference type="Gene3D" id="3.20.20.70">
    <property type="entry name" value="Aldolase class I"/>
    <property type="match status" value="1"/>
</dbReference>
<dbReference type="HAMAP" id="MF_00147_B">
    <property type="entry name" value="TIM_B"/>
    <property type="match status" value="1"/>
</dbReference>
<dbReference type="InterPro" id="IPR013785">
    <property type="entry name" value="Aldolase_TIM"/>
</dbReference>
<dbReference type="InterPro" id="IPR035990">
    <property type="entry name" value="TIM_sf"/>
</dbReference>
<dbReference type="InterPro" id="IPR022896">
    <property type="entry name" value="TrioseP_Isoase_bac/euk"/>
</dbReference>
<dbReference type="InterPro" id="IPR000652">
    <property type="entry name" value="Triosephosphate_isomerase"/>
</dbReference>
<dbReference type="NCBIfam" id="TIGR00419">
    <property type="entry name" value="tim"/>
    <property type="match status" value="1"/>
</dbReference>
<dbReference type="PANTHER" id="PTHR21139">
    <property type="entry name" value="TRIOSEPHOSPHATE ISOMERASE"/>
    <property type="match status" value="1"/>
</dbReference>
<dbReference type="PANTHER" id="PTHR21139:SF42">
    <property type="entry name" value="TRIOSEPHOSPHATE ISOMERASE"/>
    <property type="match status" value="1"/>
</dbReference>
<dbReference type="Pfam" id="PF00121">
    <property type="entry name" value="TIM"/>
    <property type="match status" value="1"/>
</dbReference>
<dbReference type="SUPFAM" id="SSF51351">
    <property type="entry name" value="Triosephosphate isomerase (TIM)"/>
    <property type="match status" value="1"/>
</dbReference>
<dbReference type="PROSITE" id="PS51440">
    <property type="entry name" value="TIM_2"/>
    <property type="match status" value="1"/>
</dbReference>
<reference key="1">
    <citation type="journal article" date="2007" name="Proc. Natl. Acad. Sci. U.S.A.">
        <title>The Orientia tsutsugamushi genome reveals massive proliferation of conjugative type IV secretion system and host-cell interaction genes.</title>
        <authorList>
            <person name="Cho N.-H."/>
            <person name="Kim H.-R."/>
            <person name="Lee J.-H."/>
            <person name="Kim S.-Y."/>
            <person name="Kim J."/>
            <person name="Cha S."/>
            <person name="Kim S.-Y."/>
            <person name="Darby A.C."/>
            <person name="Fuxelius H.-H."/>
            <person name="Yin J."/>
            <person name="Kim J.H."/>
            <person name="Kim J."/>
            <person name="Lee S.J."/>
            <person name="Koh Y.-S."/>
            <person name="Jang W.-J."/>
            <person name="Park K.-H."/>
            <person name="Andersson S.G.E."/>
            <person name="Choi M.-S."/>
            <person name="Kim I.-S."/>
        </authorList>
    </citation>
    <scope>NUCLEOTIDE SEQUENCE [LARGE SCALE GENOMIC DNA]</scope>
    <source>
        <strain>Boryong</strain>
    </source>
</reference>
<proteinExistence type="inferred from homology"/>
<gene>
    <name evidence="1" type="primary">tpiA</name>
    <name type="ordered locus">OTBS_0140</name>
</gene>
<name>TPIS_ORITB</name>
<comment type="function">
    <text evidence="1">Involved in the gluconeogenesis. Catalyzes stereospecifically the conversion of dihydroxyacetone phosphate (DHAP) to D-glyceraldehyde-3-phosphate (G3P).</text>
</comment>
<comment type="catalytic activity">
    <reaction evidence="1">
        <text>D-glyceraldehyde 3-phosphate = dihydroxyacetone phosphate</text>
        <dbReference type="Rhea" id="RHEA:18585"/>
        <dbReference type="ChEBI" id="CHEBI:57642"/>
        <dbReference type="ChEBI" id="CHEBI:59776"/>
        <dbReference type="EC" id="5.3.1.1"/>
    </reaction>
</comment>
<comment type="pathway">
    <text evidence="1">Carbohydrate biosynthesis; gluconeogenesis.</text>
</comment>
<comment type="pathway">
    <text evidence="1">Carbohydrate degradation; glycolysis; D-glyceraldehyde 3-phosphate from glycerone phosphate: step 1/1.</text>
</comment>
<comment type="subunit">
    <text evidence="1">Homodimer.</text>
</comment>
<comment type="subcellular location">
    <subcellularLocation>
        <location evidence="1">Cytoplasm</location>
    </subcellularLocation>
</comment>
<comment type="similarity">
    <text evidence="1">Belongs to the triosephosphate isomerase family.</text>
</comment>
<keyword id="KW-0963">Cytoplasm</keyword>
<keyword id="KW-0312">Gluconeogenesis</keyword>
<keyword id="KW-0324">Glycolysis</keyword>
<keyword id="KW-0413">Isomerase</keyword>
<keyword id="KW-1185">Reference proteome</keyword>
<protein>
    <recommendedName>
        <fullName evidence="1">Triosephosphate isomerase</fullName>
        <shortName evidence="1">TIM</shortName>
        <shortName evidence="1">TPI</shortName>
        <ecNumber evidence="1">5.3.1.1</ecNumber>
    </recommendedName>
    <alternativeName>
        <fullName evidence="1">Triose-phosphate isomerase</fullName>
    </alternativeName>
</protein>
<organism>
    <name type="scientific">Orientia tsutsugamushi (strain Boryong)</name>
    <name type="common">Rickettsia tsutsugamushi</name>
    <dbReference type="NCBI Taxonomy" id="357244"/>
    <lineage>
        <taxon>Bacteria</taxon>
        <taxon>Pseudomonadati</taxon>
        <taxon>Pseudomonadota</taxon>
        <taxon>Alphaproteobacteria</taxon>
        <taxon>Rickettsiales</taxon>
        <taxon>Rickettsiaceae</taxon>
        <taxon>Rickettsieae</taxon>
        <taxon>Orientia</taxon>
    </lineage>
</organism>
<feature type="chain" id="PRO_1000009850" description="Triosephosphate isomerase">
    <location>
        <begin position="1"/>
        <end position="249"/>
    </location>
</feature>
<feature type="active site" description="Electrophile" evidence="1">
    <location>
        <position position="95"/>
    </location>
</feature>
<feature type="active site" description="Proton acceptor" evidence="1">
    <location>
        <position position="163"/>
    </location>
</feature>
<feature type="binding site" evidence="1">
    <location>
        <begin position="8"/>
        <end position="10"/>
    </location>
    <ligand>
        <name>substrate</name>
    </ligand>
</feature>
<feature type="binding site" evidence="1">
    <location>
        <position position="169"/>
    </location>
    <ligand>
        <name>substrate</name>
    </ligand>
</feature>
<feature type="binding site" evidence="1">
    <location>
        <position position="209"/>
    </location>
    <ligand>
        <name>substrate</name>
    </ligand>
</feature>
<sequence>MESIVVSNWKMHFSFSEACNYLNLITSLHGNLNIAKVIFAVPNLYLSGLKLKFNDTYHFSAQDVSMITESSGPYTGEISASMLKNLNVNYAIVGHSERRLLFYEDANTIASKVRNCINNAIVPIVCIGEPIEARKNKTYLQYIAQQLSSISFSFTKNIIIAYEPVWSIGSCMVPTIDDIYEVVTMIREIQNRYIPHNIENSVKIVYGGSVSANNINQILTAGIDGVLIGKASLKLESLTTIIKTVQGLD</sequence>
<accession>A5CC41</accession>
<evidence type="ECO:0000255" key="1">
    <source>
        <dbReference type="HAMAP-Rule" id="MF_00147"/>
    </source>
</evidence>